<evidence type="ECO:0000255" key="1">
    <source>
        <dbReference type="HAMAP-Rule" id="MF_01346"/>
    </source>
</evidence>
<sequence>MVAIRPDEISTIIRQQIESYNQEVQVSNVGTVLQVGDGTARIYGLQQAMSGELLEFEDGTVGIALNLEEDNVGAVLMGDGFGIKEGGTVKATGKIAQVPVGDALVGRVVDALGRPIDGKGEILASETRLVESPAPGIVARKSVCEPMQTGITAIDAMIPVGRGQRELIIGDRKTGKTAIAIDTIINQKSEDVICVYVAIGQKASTVAQVIDTLTQRGAMDYTVVVAANANDPATLQYIAPYTGASIAEYFMYKGKATLVIYDDLTKQAQAYRQLSLLMRRPPGREAYPGDVFYLHSRLLERAAKLSDALGGGSMTALPIIETQAGDVSAYIPTNVISITDGQIFLSTDLFNAGFRPAINAGISVSRVGSAAQTKAMKKVAGKLKLELAQFDELEAFAQFASDLDAATQAQLARGQRLRQILKQPQNFPLSVWEQVAVVYAGLNGYLDDIATDKVIDFCAGLREYLKTSKPRYVEIVSTEKQLNDEAEGLLKDGINEYKQAFK</sequence>
<protein>
    <recommendedName>
        <fullName evidence="1">ATP synthase subunit alpha</fullName>
        <ecNumber evidence="1">7.1.2.2</ecNumber>
    </recommendedName>
    <alternativeName>
        <fullName evidence="1">ATP synthase F1 sector subunit alpha</fullName>
    </alternativeName>
    <alternativeName>
        <fullName evidence="1">F-ATPase subunit alpha</fullName>
    </alternativeName>
</protein>
<name>ATPA_MICAN</name>
<feature type="chain" id="PRO_1000143409" description="ATP synthase subunit alpha">
    <location>
        <begin position="1"/>
        <end position="502"/>
    </location>
</feature>
<feature type="binding site" evidence="1">
    <location>
        <begin position="170"/>
        <end position="177"/>
    </location>
    <ligand>
        <name>ATP</name>
        <dbReference type="ChEBI" id="CHEBI:30616"/>
    </ligand>
</feature>
<feature type="site" description="Required for activity" evidence="1">
    <location>
        <position position="363"/>
    </location>
</feature>
<comment type="function">
    <text evidence="1">Produces ATP from ADP in the presence of a proton gradient across the membrane. The alpha chain is a regulatory subunit.</text>
</comment>
<comment type="catalytic activity">
    <reaction evidence="1">
        <text>ATP + H2O + 4 H(+)(in) = ADP + phosphate + 5 H(+)(out)</text>
        <dbReference type="Rhea" id="RHEA:57720"/>
        <dbReference type="ChEBI" id="CHEBI:15377"/>
        <dbReference type="ChEBI" id="CHEBI:15378"/>
        <dbReference type="ChEBI" id="CHEBI:30616"/>
        <dbReference type="ChEBI" id="CHEBI:43474"/>
        <dbReference type="ChEBI" id="CHEBI:456216"/>
        <dbReference type="EC" id="7.1.2.2"/>
    </reaction>
</comment>
<comment type="subunit">
    <text evidence="1">F-type ATPases have 2 components, CF(1) - the catalytic core - and CF(0) - the membrane proton channel. CF(1) has five subunits: alpha(3), beta(3), gamma(1), delta(1), epsilon(1). CF(0) has four main subunits: a, b, b' and c.</text>
</comment>
<comment type="subcellular location">
    <subcellularLocation>
        <location evidence="1">Cellular thylakoid membrane</location>
        <topology evidence="1">Peripheral membrane protein</topology>
    </subcellularLocation>
</comment>
<comment type="similarity">
    <text evidence="1">Belongs to the ATPase alpha/beta chains family.</text>
</comment>
<dbReference type="EC" id="7.1.2.2" evidence="1"/>
<dbReference type="EMBL" id="AP009552">
    <property type="protein sequence ID" value="BAG04838.1"/>
    <property type="molecule type" value="Genomic_DNA"/>
</dbReference>
<dbReference type="RefSeq" id="WP_012267463.1">
    <property type="nucleotide sequence ID" value="NC_010296.1"/>
</dbReference>
<dbReference type="SMR" id="B0JWV1"/>
<dbReference type="STRING" id="449447.MAE_50160"/>
<dbReference type="PaxDb" id="449447-MAE_50160"/>
<dbReference type="EnsemblBacteria" id="BAG04838">
    <property type="protein sequence ID" value="BAG04838"/>
    <property type="gene ID" value="MAE_50160"/>
</dbReference>
<dbReference type="KEGG" id="mar:MAE_50160"/>
<dbReference type="PATRIC" id="fig|449447.4.peg.4560"/>
<dbReference type="eggNOG" id="COG0056">
    <property type="taxonomic scope" value="Bacteria"/>
</dbReference>
<dbReference type="HOGENOM" id="CLU_010091_2_1_3"/>
<dbReference type="BioCyc" id="MAER449447:MAE_RS21770-MONOMER"/>
<dbReference type="Proteomes" id="UP000001510">
    <property type="component" value="Chromosome"/>
</dbReference>
<dbReference type="GO" id="GO:0031676">
    <property type="term" value="C:plasma membrane-derived thylakoid membrane"/>
    <property type="evidence" value="ECO:0007669"/>
    <property type="project" value="UniProtKB-SubCell"/>
</dbReference>
<dbReference type="GO" id="GO:0045259">
    <property type="term" value="C:proton-transporting ATP synthase complex"/>
    <property type="evidence" value="ECO:0007669"/>
    <property type="project" value="UniProtKB-KW"/>
</dbReference>
<dbReference type="GO" id="GO:0043531">
    <property type="term" value="F:ADP binding"/>
    <property type="evidence" value="ECO:0007669"/>
    <property type="project" value="TreeGrafter"/>
</dbReference>
<dbReference type="GO" id="GO:0005524">
    <property type="term" value="F:ATP binding"/>
    <property type="evidence" value="ECO:0007669"/>
    <property type="project" value="UniProtKB-UniRule"/>
</dbReference>
<dbReference type="GO" id="GO:0046933">
    <property type="term" value="F:proton-transporting ATP synthase activity, rotational mechanism"/>
    <property type="evidence" value="ECO:0007669"/>
    <property type="project" value="UniProtKB-UniRule"/>
</dbReference>
<dbReference type="CDD" id="cd18113">
    <property type="entry name" value="ATP-synt_F1_alpha_C"/>
    <property type="match status" value="1"/>
</dbReference>
<dbReference type="CDD" id="cd18116">
    <property type="entry name" value="ATP-synt_F1_alpha_N"/>
    <property type="match status" value="1"/>
</dbReference>
<dbReference type="CDD" id="cd01132">
    <property type="entry name" value="F1-ATPase_alpha_CD"/>
    <property type="match status" value="1"/>
</dbReference>
<dbReference type="FunFam" id="1.20.150.20:FF:000001">
    <property type="entry name" value="ATP synthase subunit alpha"/>
    <property type="match status" value="1"/>
</dbReference>
<dbReference type="FunFam" id="2.40.30.20:FF:000001">
    <property type="entry name" value="ATP synthase subunit alpha"/>
    <property type="match status" value="1"/>
</dbReference>
<dbReference type="FunFam" id="3.40.50.300:FF:000002">
    <property type="entry name" value="ATP synthase subunit alpha"/>
    <property type="match status" value="1"/>
</dbReference>
<dbReference type="Gene3D" id="2.40.30.20">
    <property type="match status" value="1"/>
</dbReference>
<dbReference type="Gene3D" id="1.20.150.20">
    <property type="entry name" value="ATP synthase alpha/beta chain, C-terminal domain"/>
    <property type="match status" value="1"/>
</dbReference>
<dbReference type="Gene3D" id="3.40.50.300">
    <property type="entry name" value="P-loop containing nucleotide triphosphate hydrolases"/>
    <property type="match status" value="1"/>
</dbReference>
<dbReference type="HAMAP" id="MF_01346">
    <property type="entry name" value="ATP_synth_alpha_bact"/>
    <property type="match status" value="1"/>
</dbReference>
<dbReference type="InterPro" id="IPR023366">
    <property type="entry name" value="ATP_synth_asu-like_sf"/>
</dbReference>
<dbReference type="InterPro" id="IPR000793">
    <property type="entry name" value="ATP_synth_asu_C"/>
</dbReference>
<dbReference type="InterPro" id="IPR038376">
    <property type="entry name" value="ATP_synth_asu_C_sf"/>
</dbReference>
<dbReference type="InterPro" id="IPR033732">
    <property type="entry name" value="ATP_synth_F1_a_nt-bd_dom"/>
</dbReference>
<dbReference type="InterPro" id="IPR005294">
    <property type="entry name" value="ATP_synth_F1_asu"/>
</dbReference>
<dbReference type="InterPro" id="IPR020003">
    <property type="entry name" value="ATPase_a/bsu_AS"/>
</dbReference>
<dbReference type="InterPro" id="IPR004100">
    <property type="entry name" value="ATPase_F1/V1/A1_a/bsu_N"/>
</dbReference>
<dbReference type="InterPro" id="IPR036121">
    <property type="entry name" value="ATPase_F1/V1/A1_a/bsu_N_sf"/>
</dbReference>
<dbReference type="InterPro" id="IPR000194">
    <property type="entry name" value="ATPase_F1/V1/A1_a/bsu_nucl-bd"/>
</dbReference>
<dbReference type="InterPro" id="IPR027417">
    <property type="entry name" value="P-loop_NTPase"/>
</dbReference>
<dbReference type="NCBIfam" id="TIGR00962">
    <property type="entry name" value="atpA"/>
    <property type="match status" value="1"/>
</dbReference>
<dbReference type="NCBIfam" id="NF009884">
    <property type="entry name" value="PRK13343.1"/>
    <property type="match status" value="1"/>
</dbReference>
<dbReference type="PANTHER" id="PTHR48082">
    <property type="entry name" value="ATP SYNTHASE SUBUNIT ALPHA, MITOCHONDRIAL"/>
    <property type="match status" value="1"/>
</dbReference>
<dbReference type="PANTHER" id="PTHR48082:SF2">
    <property type="entry name" value="ATP SYNTHASE SUBUNIT ALPHA, MITOCHONDRIAL"/>
    <property type="match status" value="1"/>
</dbReference>
<dbReference type="Pfam" id="PF00006">
    <property type="entry name" value="ATP-synt_ab"/>
    <property type="match status" value="1"/>
</dbReference>
<dbReference type="Pfam" id="PF00306">
    <property type="entry name" value="ATP-synt_ab_C"/>
    <property type="match status" value="1"/>
</dbReference>
<dbReference type="Pfam" id="PF02874">
    <property type="entry name" value="ATP-synt_ab_N"/>
    <property type="match status" value="1"/>
</dbReference>
<dbReference type="PIRSF" id="PIRSF039088">
    <property type="entry name" value="F_ATPase_subunit_alpha"/>
    <property type="match status" value="1"/>
</dbReference>
<dbReference type="SUPFAM" id="SSF47917">
    <property type="entry name" value="C-terminal domain of alpha and beta subunits of F1 ATP synthase"/>
    <property type="match status" value="1"/>
</dbReference>
<dbReference type="SUPFAM" id="SSF50615">
    <property type="entry name" value="N-terminal domain of alpha and beta subunits of F1 ATP synthase"/>
    <property type="match status" value="1"/>
</dbReference>
<dbReference type="SUPFAM" id="SSF52540">
    <property type="entry name" value="P-loop containing nucleoside triphosphate hydrolases"/>
    <property type="match status" value="1"/>
</dbReference>
<dbReference type="PROSITE" id="PS00152">
    <property type="entry name" value="ATPASE_ALPHA_BETA"/>
    <property type="match status" value="1"/>
</dbReference>
<accession>B0JWV1</accession>
<reference key="1">
    <citation type="journal article" date="2007" name="DNA Res.">
        <title>Complete genomic structure of the bloom-forming toxic cyanobacterium Microcystis aeruginosa NIES-843.</title>
        <authorList>
            <person name="Kaneko T."/>
            <person name="Nakajima N."/>
            <person name="Okamoto S."/>
            <person name="Suzuki I."/>
            <person name="Tanabe Y."/>
            <person name="Tamaoki M."/>
            <person name="Nakamura Y."/>
            <person name="Kasai F."/>
            <person name="Watanabe A."/>
            <person name="Kawashima K."/>
            <person name="Kishida Y."/>
            <person name="Ono A."/>
            <person name="Shimizu Y."/>
            <person name="Takahashi C."/>
            <person name="Minami C."/>
            <person name="Fujishiro T."/>
            <person name="Kohara M."/>
            <person name="Katoh M."/>
            <person name="Nakazaki N."/>
            <person name="Nakayama S."/>
            <person name="Yamada M."/>
            <person name="Tabata S."/>
            <person name="Watanabe M.M."/>
        </authorList>
    </citation>
    <scope>NUCLEOTIDE SEQUENCE [LARGE SCALE GENOMIC DNA]</scope>
    <source>
        <strain>NIES-843 / IAM M-247</strain>
    </source>
</reference>
<organism>
    <name type="scientific">Microcystis aeruginosa (strain NIES-843 / IAM M-2473)</name>
    <dbReference type="NCBI Taxonomy" id="449447"/>
    <lineage>
        <taxon>Bacteria</taxon>
        <taxon>Bacillati</taxon>
        <taxon>Cyanobacteriota</taxon>
        <taxon>Cyanophyceae</taxon>
        <taxon>Oscillatoriophycideae</taxon>
        <taxon>Chroococcales</taxon>
        <taxon>Microcystaceae</taxon>
        <taxon>Microcystis</taxon>
    </lineage>
</organism>
<keyword id="KW-0066">ATP synthesis</keyword>
<keyword id="KW-0067">ATP-binding</keyword>
<keyword id="KW-0139">CF(1)</keyword>
<keyword id="KW-0375">Hydrogen ion transport</keyword>
<keyword id="KW-0406">Ion transport</keyword>
<keyword id="KW-0472">Membrane</keyword>
<keyword id="KW-0547">Nucleotide-binding</keyword>
<keyword id="KW-0793">Thylakoid</keyword>
<keyword id="KW-1278">Translocase</keyword>
<keyword id="KW-0813">Transport</keyword>
<gene>
    <name evidence="1" type="primary">atpA</name>
    <name type="ordered locus">MAE_50160</name>
</gene>
<proteinExistence type="inferred from homology"/>